<proteinExistence type="inferred from homology"/>
<sequence length="197" mass="21263">MDMQSRIRRLFQASIDTKQQAMDILAPHIEQASLVMVNALLNEGKMLACGNGGSAGDAQHFSSELLNRFERERPSLPAIALTTDSSTLTSIANDYSYNEIFSKQIRALGQPGDVLLAISTSGNSANVIQAIQAAHDREMIVVALTGRDGGGMASLLLPEDVEIRVPSTVTARIQEVHLLAIHCLCDLIDSQLFGSEE</sequence>
<name>GMHA_PSEPW</name>
<accession>B1J1X7</accession>
<feature type="chain" id="PRO_1000092285" description="Phosphoheptose isomerase">
    <location>
        <begin position="1"/>
        <end position="197"/>
    </location>
</feature>
<feature type="domain" description="SIS" evidence="1">
    <location>
        <begin position="36"/>
        <end position="197"/>
    </location>
</feature>
<feature type="binding site" evidence="1">
    <location>
        <begin position="51"/>
        <end position="53"/>
    </location>
    <ligand>
        <name>substrate</name>
    </ligand>
</feature>
<feature type="binding site" evidence="1">
    <location>
        <position position="60"/>
    </location>
    <ligand>
        <name>Zn(2+)</name>
        <dbReference type="ChEBI" id="CHEBI:29105"/>
    </ligand>
</feature>
<feature type="binding site" evidence="1">
    <location>
        <position position="64"/>
    </location>
    <ligand>
        <name>substrate</name>
    </ligand>
</feature>
<feature type="binding site" evidence="1">
    <location>
        <position position="64"/>
    </location>
    <ligand>
        <name>Zn(2+)</name>
        <dbReference type="ChEBI" id="CHEBI:29105"/>
    </ligand>
</feature>
<feature type="binding site" evidence="1">
    <location>
        <begin position="93"/>
        <end position="94"/>
    </location>
    <ligand>
        <name>substrate</name>
    </ligand>
</feature>
<feature type="binding site" evidence="1">
    <location>
        <begin position="119"/>
        <end position="121"/>
    </location>
    <ligand>
        <name>substrate</name>
    </ligand>
</feature>
<feature type="binding site" evidence="1">
    <location>
        <position position="124"/>
    </location>
    <ligand>
        <name>substrate</name>
    </ligand>
</feature>
<feature type="binding site" evidence="1">
    <location>
        <position position="174"/>
    </location>
    <ligand>
        <name>substrate</name>
    </ligand>
</feature>
<feature type="binding site" evidence="1">
    <location>
        <position position="174"/>
    </location>
    <ligand>
        <name>Zn(2+)</name>
        <dbReference type="ChEBI" id="CHEBI:29105"/>
    </ligand>
</feature>
<feature type="binding site" evidence="1">
    <location>
        <position position="182"/>
    </location>
    <ligand>
        <name>Zn(2+)</name>
        <dbReference type="ChEBI" id="CHEBI:29105"/>
    </ligand>
</feature>
<comment type="function">
    <text evidence="1">Catalyzes the isomerization of sedoheptulose 7-phosphate in D-glycero-D-manno-heptose 7-phosphate.</text>
</comment>
<comment type="catalytic activity">
    <reaction evidence="1">
        <text>2 D-sedoheptulose 7-phosphate = D-glycero-alpha-D-manno-heptose 7-phosphate + D-glycero-beta-D-manno-heptose 7-phosphate</text>
        <dbReference type="Rhea" id="RHEA:27489"/>
        <dbReference type="ChEBI" id="CHEBI:57483"/>
        <dbReference type="ChEBI" id="CHEBI:60203"/>
        <dbReference type="ChEBI" id="CHEBI:60204"/>
        <dbReference type="EC" id="5.3.1.28"/>
    </reaction>
</comment>
<comment type="cofactor">
    <cofactor evidence="1">
        <name>Zn(2+)</name>
        <dbReference type="ChEBI" id="CHEBI:29105"/>
    </cofactor>
    <text evidence="1">Binds 1 zinc ion per subunit.</text>
</comment>
<comment type="pathway">
    <text evidence="1">Carbohydrate biosynthesis; D-glycero-D-manno-heptose 7-phosphate biosynthesis; D-glycero-alpha-D-manno-heptose 7-phosphate and D-glycero-beta-D-manno-heptose 7-phosphate from sedoheptulose 7-phosphate: step 1/1.</text>
</comment>
<comment type="subunit">
    <text evidence="1">Homotetramer.</text>
</comment>
<comment type="subcellular location">
    <subcellularLocation>
        <location evidence="1">Cytoplasm</location>
    </subcellularLocation>
</comment>
<comment type="miscellaneous">
    <text evidence="1">The reaction produces a racemic mixture of D-glycero-alpha-D-manno-heptose 7-phosphate and D-glycero-beta-D-manno-heptose 7-phosphate.</text>
</comment>
<comment type="similarity">
    <text evidence="1">Belongs to the SIS family. GmhA subfamily.</text>
</comment>
<gene>
    <name evidence="1" type="primary">gmhA</name>
    <name type="ordered locus">PputW619_0931</name>
</gene>
<organism>
    <name type="scientific">Pseudomonas putida (strain W619)</name>
    <dbReference type="NCBI Taxonomy" id="390235"/>
    <lineage>
        <taxon>Bacteria</taxon>
        <taxon>Pseudomonadati</taxon>
        <taxon>Pseudomonadota</taxon>
        <taxon>Gammaproteobacteria</taxon>
        <taxon>Pseudomonadales</taxon>
        <taxon>Pseudomonadaceae</taxon>
        <taxon>Pseudomonas</taxon>
    </lineage>
</organism>
<keyword id="KW-0119">Carbohydrate metabolism</keyword>
<keyword id="KW-0963">Cytoplasm</keyword>
<keyword id="KW-0413">Isomerase</keyword>
<keyword id="KW-0479">Metal-binding</keyword>
<keyword id="KW-0862">Zinc</keyword>
<dbReference type="EC" id="5.3.1.28" evidence="1"/>
<dbReference type="EMBL" id="CP000949">
    <property type="protein sequence ID" value="ACA71436.1"/>
    <property type="molecule type" value="Genomic_DNA"/>
</dbReference>
<dbReference type="SMR" id="B1J1X7"/>
<dbReference type="STRING" id="390235.PputW619_0931"/>
<dbReference type="KEGG" id="ppw:PputW619_0931"/>
<dbReference type="eggNOG" id="COG0279">
    <property type="taxonomic scope" value="Bacteria"/>
</dbReference>
<dbReference type="HOGENOM" id="CLU_080999_3_1_6"/>
<dbReference type="OrthoDB" id="9810929at2"/>
<dbReference type="UniPathway" id="UPA00041">
    <property type="reaction ID" value="UER00436"/>
</dbReference>
<dbReference type="GO" id="GO:0005737">
    <property type="term" value="C:cytoplasm"/>
    <property type="evidence" value="ECO:0007669"/>
    <property type="project" value="UniProtKB-SubCell"/>
</dbReference>
<dbReference type="GO" id="GO:0097367">
    <property type="term" value="F:carbohydrate derivative binding"/>
    <property type="evidence" value="ECO:0007669"/>
    <property type="project" value="InterPro"/>
</dbReference>
<dbReference type="GO" id="GO:0008968">
    <property type="term" value="F:D-sedoheptulose 7-phosphate isomerase activity"/>
    <property type="evidence" value="ECO:0007669"/>
    <property type="project" value="UniProtKB-UniRule"/>
</dbReference>
<dbReference type="GO" id="GO:0008270">
    <property type="term" value="F:zinc ion binding"/>
    <property type="evidence" value="ECO:0007669"/>
    <property type="project" value="UniProtKB-UniRule"/>
</dbReference>
<dbReference type="GO" id="GO:0005975">
    <property type="term" value="P:carbohydrate metabolic process"/>
    <property type="evidence" value="ECO:0007669"/>
    <property type="project" value="UniProtKB-UniRule"/>
</dbReference>
<dbReference type="GO" id="GO:2001061">
    <property type="term" value="P:D-glycero-D-manno-heptose 7-phosphate biosynthetic process"/>
    <property type="evidence" value="ECO:0007669"/>
    <property type="project" value="UniProtKB-UniPathway"/>
</dbReference>
<dbReference type="CDD" id="cd05006">
    <property type="entry name" value="SIS_GmhA"/>
    <property type="match status" value="1"/>
</dbReference>
<dbReference type="Gene3D" id="3.40.50.10490">
    <property type="entry name" value="Glucose-6-phosphate isomerase like protein, domain 1"/>
    <property type="match status" value="1"/>
</dbReference>
<dbReference type="HAMAP" id="MF_00067">
    <property type="entry name" value="GmhA"/>
    <property type="match status" value="1"/>
</dbReference>
<dbReference type="InterPro" id="IPR035461">
    <property type="entry name" value="GmhA/DiaA"/>
</dbReference>
<dbReference type="InterPro" id="IPR004515">
    <property type="entry name" value="Phosphoheptose_Isoase"/>
</dbReference>
<dbReference type="InterPro" id="IPR001347">
    <property type="entry name" value="SIS_dom"/>
</dbReference>
<dbReference type="InterPro" id="IPR046348">
    <property type="entry name" value="SIS_dom_sf"/>
</dbReference>
<dbReference type="InterPro" id="IPR050099">
    <property type="entry name" value="SIS_GmhA/DiaA_subfam"/>
</dbReference>
<dbReference type="NCBIfam" id="NF010546">
    <property type="entry name" value="PRK13936.1"/>
    <property type="match status" value="1"/>
</dbReference>
<dbReference type="PANTHER" id="PTHR30390:SF6">
    <property type="entry name" value="DNAA INITIATOR-ASSOCIATING PROTEIN DIAA"/>
    <property type="match status" value="1"/>
</dbReference>
<dbReference type="PANTHER" id="PTHR30390">
    <property type="entry name" value="SEDOHEPTULOSE 7-PHOSPHATE ISOMERASE / DNAA INITIATOR-ASSOCIATING FACTOR FOR REPLICATION INITIATION"/>
    <property type="match status" value="1"/>
</dbReference>
<dbReference type="Pfam" id="PF13580">
    <property type="entry name" value="SIS_2"/>
    <property type="match status" value="1"/>
</dbReference>
<dbReference type="SUPFAM" id="SSF53697">
    <property type="entry name" value="SIS domain"/>
    <property type="match status" value="1"/>
</dbReference>
<dbReference type="PROSITE" id="PS51464">
    <property type="entry name" value="SIS"/>
    <property type="match status" value="1"/>
</dbReference>
<reference key="1">
    <citation type="submission" date="2008-02" db="EMBL/GenBank/DDBJ databases">
        <title>Complete sequence of Pseudomonas putida W619.</title>
        <authorList>
            <person name="Copeland A."/>
            <person name="Lucas S."/>
            <person name="Lapidus A."/>
            <person name="Barry K."/>
            <person name="Detter J.C."/>
            <person name="Glavina del Rio T."/>
            <person name="Dalin E."/>
            <person name="Tice H."/>
            <person name="Pitluck S."/>
            <person name="Chain P."/>
            <person name="Malfatti S."/>
            <person name="Shin M."/>
            <person name="Vergez L."/>
            <person name="Schmutz J."/>
            <person name="Larimer F."/>
            <person name="Land M."/>
            <person name="Hauser L."/>
            <person name="Kyrpides N."/>
            <person name="Kim E."/>
            <person name="Taghavi S."/>
            <person name="Vangronsveld D."/>
            <person name="van der Lelie D."/>
            <person name="Richardson P."/>
        </authorList>
    </citation>
    <scope>NUCLEOTIDE SEQUENCE [LARGE SCALE GENOMIC DNA]</scope>
    <source>
        <strain>W619</strain>
    </source>
</reference>
<evidence type="ECO:0000255" key="1">
    <source>
        <dbReference type="HAMAP-Rule" id="MF_00067"/>
    </source>
</evidence>
<protein>
    <recommendedName>
        <fullName evidence="1">Phosphoheptose isomerase</fullName>
        <ecNumber evidence="1">5.3.1.28</ecNumber>
    </recommendedName>
    <alternativeName>
        <fullName evidence="1">Sedoheptulose 7-phosphate isomerase</fullName>
    </alternativeName>
</protein>